<protein>
    <recommendedName>
        <fullName>Uncharacterized protein YccE</fullName>
    </recommendedName>
    <alternativeName>
        <fullName>ORF-D</fullName>
    </alternativeName>
</protein>
<dbReference type="EMBL" id="U00096">
    <property type="protein sequence ID" value="AAC74086.1"/>
    <property type="molecule type" value="Genomic_DNA"/>
</dbReference>
<dbReference type="EMBL" id="AP009048">
    <property type="protein sequence ID" value="BAA35768.1"/>
    <property type="molecule type" value="Genomic_DNA"/>
</dbReference>
<dbReference type="EMBL" id="D16500">
    <property type="status" value="NOT_ANNOTATED_CDS"/>
    <property type="molecule type" value="Genomic_DNA"/>
</dbReference>
<dbReference type="PIR" id="G64841">
    <property type="entry name" value="G64841"/>
</dbReference>
<dbReference type="RefSeq" id="NP_415521.1">
    <property type="nucleotide sequence ID" value="NC_000913.3"/>
</dbReference>
<dbReference type="RefSeq" id="WP_000535346.1">
    <property type="nucleotide sequence ID" value="NZ_LN832404.1"/>
</dbReference>
<dbReference type="BioGRID" id="4260040">
    <property type="interactions" value="11"/>
</dbReference>
<dbReference type="FunCoup" id="P36661">
    <property type="interactions" value="6"/>
</dbReference>
<dbReference type="IntAct" id="P36661">
    <property type="interactions" value="1"/>
</dbReference>
<dbReference type="STRING" id="511145.b1001"/>
<dbReference type="PaxDb" id="511145-b1001"/>
<dbReference type="EnsemblBacteria" id="AAC74086">
    <property type="protein sequence ID" value="AAC74086"/>
    <property type="gene ID" value="b1001"/>
</dbReference>
<dbReference type="GeneID" id="947468"/>
<dbReference type="KEGG" id="ecj:JW0986"/>
<dbReference type="KEGG" id="eco:b1001"/>
<dbReference type="KEGG" id="ecoc:C3026_06095"/>
<dbReference type="PATRIC" id="fig|511145.12.peg.1037"/>
<dbReference type="EchoBASE" id="EB2113"/>
<dbReference type="eggNOG" id="ENOG5033Q8G">
    <property type="taxonomic scope" value="Bacteria"/>
</dbReference>
<dbReference type="HOGENOM" id="CLU_049864_0_0_6"/>
<dbReference type="InParanoid" id="P36661"/>
<dbReference type="OMA" id="YSDYCFD"/>
<dbReference type="BioCyc" id="EcoCyc:EG12196-MONOMER"/>
<dbReference type="PRO" id="PR:P36661"/>
<dbReference type="Proteomes" id="UP000000625">
    <property type="component" value="Chromosome"/>
</dbReference>
<dbReference type="NCBIfam" id="NF007304">
    <property type="entry name" value="PRK09784.1"/>
    <property type="match status" value="1"/>
</dbReference>
<feature type="chain" id="PRO_0000168782" description="Uncharacterized protein YccE">
    <location>
        <begin position="1"/>
        <end position="418"/>
    </location>
</feature>
<keyword id="KW-1185">Reference proteome</keyword>
<gene>
    <name type="primary">yccE</name>
    <name type="ordered locus">b1001</name>
    <name type="ordered locus">JW0986</name>
</gene>
<accession>P36661</accession>
<accession>P75889</accession>
<reference key="1">
    <citation type="journal article" date="1996" name="DNA Res.">
        <title>A 718-kb DNA sequence of the Escherichia coli K-12 genome corresponding to the 12.7-28.0 min region on the linkage map.</title>
        <authorList>
            <person name="Oshima T."/>
            <person name="Aiba H."/>
            <person name="Baba T."/>
            <person name="Fujita K."/>
            <person name="Hayashi K."/>
            <person name="Honjo A."/>
            <person name="Ikemoto K."/>
            <person name="Inada T."/>
            <person name="Itoh T."/>
            <person name="Kajihara M."/>
            <person name="Kanai K."/>
            <person name="Kashimoto K."/>
            <person name="Kimura S."/>
            <person name="Kitagawa M."/>
            <person name="Makino K."/>
            <person name="Masuda S."/>
            <person name="Miki T."/>
            <person name="Mizobuchi K."/>
            <person name="Mori H."/>
            <person name="Motomura K."/>
            <person name="Nakamura Y."/>
            <person name="Nashimoto H."/>
            <person name="Nishio Y."/>
            <person name="Saito N."/>
            <person name="Sampei G."/>
            <person name="Seki Y."/>
            <person name="Tagami H."/>
            <person name="Takemoto K."/>
            <person name="Wada C."/>
            <person name="Yamamoto Y."/>
            <person name="Yano M."/>
            <person name="Horiuchi T."/>
        </authorList>
    </citation>
    <scope>NUCLEOTIDE SEQUENCE [LARGE SCALE GENOMIC DNA]</scope>
    <source>
        <strain>K12 / W3110 / ATCC 27325 / DSM 5911</strain>
    </source>
</reference>
<reference key="2">
    <citation type="journal article" date="1997" name="Science">
        <title>The complete genome sequence of Escherichia coli K-12.</title>
        <authorList>
            <person name="Blattner F.R."/>
            <person name="Plunkett G. III"/>
            <person name="Bloch C.A."/>
            <person name="Perna N.T."/>
            <person name="Burland V."/>
            <person name="Riley M."/>
            <person name="Collado-Vides J."/>
            <person name="Glasner J.D."/>
            <person name="Rode C.K."/>
            <person name="Mayhew G.F."/>
            <person name="Gregor J."/>
            <person name="Davis N.W."/>
            <person name="Kirkpatrick H.A."/>
            <person name="Goeden M.A."/>
            <person name="Rose D.J."/>
            <person name="Mau B."/>
            <person name="Shao Y."/>
        </authorList>
    </citation>
    <scope>NUCLEOTIDE SEQUENCE [LARGE SCALE GENOMIC DNA]</scope>
    <source>
        <strain>K12 / MG1655 / ATCC 47076</strain>
    </source>
</reference>
<reference key="3">
    <citation type="journal article" date="2006" name="Mol. Syst. Biol.">
        <title>Highly accurate genome sequences of Escherichia coli K-12 strains MG1655 and W3110.</title>
        <authorList>
            <person name="Hayashi K."/>
            <person name="Morooka N."/>
            <person name="Yamamoto Y."/>
            <person name="Fujita K."/>
            <person name="Isono K."/>
            <person name="Choi S."/>
            <person name="Ohtsubo E."/>
            <person name="Baba T."/>
            <person name="Wanner B.L."/>
            <person name="Mori H."/>
            <person name="Horiuchi T."/>
        </authorList>
    </citation>
    <scope>NUCLEOTIDE SEQUENCE [LARGE SCALE GENOMIC DNA]</scope>
    <source>
        <strain>K12 / W3110 / ATCC 27325 / DSM 5911</strain>
    </source>
</reference>
<reference key="4">
    <citation type="journal article" date="1994" name="Proc. Natl. Acad. Sci. U.S.A.">
        <title>An analogue of the DnaJ molecular chaperone in Escherichia coli.</title>
        <authorList>
            <person name="Ueguchi C."/>
            <person name="Kakeda M."/>
            <person name="Yamada H."/>
            <person name="Mizuno T."/>
        </authorList>
    </citation>
    <scope>NUCLEOTIDE SEQUENCE [GENOMIC DNA] OF 1-242</scope>
    <source>
        <strain>K12</strain>
    </source>
</reference>
<proteinExistence type="predicted"/>
<name>YCCE_ECOLI</name>
<sequence>MGSNIHGISCTANNYLKQAWNDIKNEYEKNQTYSITLFENTLVCFMRLYNELRRKVNEEDTPCLECESLEKEFEEMQNDNDLSLFMRILRTNDTQIYSGVSGGITYTIQYVRDIDIVRVSLPGRASESITDFKGYYWYNFMEYIENINACDDVFSEYCFDDENISVQPERINTPGISDLDSDIDLSGISFIQRETNQALGLKYAPVDGDGYCLLRAILVLKQHDYSWALVSYKMQKEVYNEFIKMVDKKTIEALVDTAFYNLREDVKTLFGVDLQSDNQIQGQSSLMSWSFLFFKKQFIDSCLNNEKCILHLPEFIFNDNKNLLALDTDTSDRIKAVKNFLVVLSDSICSLFIVNSNVASISLGNESFSTDEDLEYGYLMNTGNHYDVYLPPELFAQAYKLNNKEMNAQLDYLNRYAI</sequence>
<organism>
    <name type="scientific">Escherichia coli (strain K12)</name>
    <dbReference type="NCBI Taxonomy" id="83333"/>
    <lineage>
        <taxon>Bacteria</taxon>
        <taxon>Pseudomonadati</taxon>
        <taxon>Pseudomonadota</taxon>
        <taxon>Gammaproteobacteria</taxon>
        <taxon>Enterobacterales</taxon>
        <taxon>Enterobacteriaceae</taxon>
        <taxon>Escherichia</taxon>
    </lineage>
</organism>